<accession>T0CUB8</accession>
<proteinExistence type="inferred from homology"/>
<feature type="chain" id="PRO_0000451205" description="RNA polymerase sigma factor TcsR">
    <location>
        <begin position="1"/>
        <end position="170"/>
    </location>
</feature>
<feature type="DNA-binding region" description="H-T-H motif" evidence="4">
    <location>
        <begin position="143"/>
        <end position="162"/>
    </location>
</feature>
<feature type="region of interest" description="Sigma-70 factor domain-4" evidence="1">
    <location>
        <begin position="122"/>
        <end position="169"/>
    </location>
</feature>
<protein>
    <recommendedName>
        <fullName evidence="4">RNA polymerase sigma factor TcsR</fullName>
    </recommendedName>
</protein>
<name>TCSR3_PARS9</name>
<keyword id="KW-0238">DNA-binding</keyword>
<keyword id="KW-0731">Sigma factor</keyword>
<keyword id="KW-0804">Transcription</keyword>
<keyword id="KW-0805">Transcription regulation</keyword>
<gene>
    <name evidence="3" type="primary">tcsR</name>
    <name evidence="5" type="ORF">H477_0267</name>
</gene>
<sequence>MSNLYESIRKYKCGYIEEILNILDMFDPLLNKFQRNSCYEDMKSELSLFMFNLIDNFPLEKDCFKEDKFIINYIYKSLKNKFIQVNKLHQKVKSYETNIDIIWVNNCDYANLLSTVIFEDIIKDLTQNEKNILRKIYLHGLRESEISRELNISRQAVNKTHLRALEKLKN</sequence>
<dbReference type="EMBL" id="APWR01000088">
    <property type="protein sequence ID" value="EPZ61155.1"/>
    <property type="molecule type" value="Genomic_DNA"/>
</dbReference>
<dbReference type="SMR" id="T0CUB8"/>
<dbReference type="PATRIC" id="fig|1292036.3.peg.1021"/>
<dbReference type="GO" id="GO:0003677">
    <property type="term" value="F:DNA binding"/>
    <property type="evidence" value="ECO:0007669"/>
    <property type="project" value="UniProtKB-KW"/>
</dbReference>
<dbReference type="GO" id="GO:0016987">
    <property type="term" value="F:sigma factor activity"/>
    <property type="evidence" value="ECO:0007669"/>
    <property type="project" value="UniProtKB-KW"/>
</dbReference>
<dbReference type="GO" id="GO:0006352">
    <property type="term" value="P:DNA-templated transcription initiation"/>
    <property type="evidence" value="ECO:0007669"/>
    <property type="project" value="InterPro"/>
</dbReference>
<dbReference type="CDD" id="cd06171">
    <property type="entry name" value="Sigma70_r4"/>
    <property type="match status" value="1"/>
</dbReference>
<dbReference type="Gene3D" id="1.20.140.160">
    <property type="match status" value="1"/>
</dbReference>
<dbReference type="InterPro" id="IPR014284">
    <property type="entry name" value="RNA_pol_sigma-70_dom"/>
</dbReference>
<dbReference type="InterPro" id="IPR007630">
    <property type="entry name" value="RNA_pol_sigma70_r4"/>
</dbReference>
<dbReference type="InterPro" id="IPR013324">
    <property type="entry name" value="RNA_pol_sigma_r3/r4-like"/>
</dbReference>
<dbReference type="NCBIfam" id="TIGR02937">
    <property type="entry name" value="sigma70-ECF"/>
    <property type="match status" value="1"/>
</dbReference>
<dbReference type="Pfam" id="PF04545">
    <property type="entry name" value="Sigma70_r4"/>
    <property type="match status" value="1"/>
</dbReference>
<dbReference type="SUPFAM" id="SSF88659">
    <property type="entry name" value="Sigma3 and sigma4 domains of RNA polymerase sigma factors"/>
    <property type="match status" value="1"/>
</dbReference>
<reference key="1">
    <citation type="journal article" date="2013" name="J. Bacteriol.">
        <title>Identification and characterization of Clostridium sordellii toxin gene regulator.</title>
        <authorList>
            <person name="Sirigi Reddy A.R."/>
            <person name="Girinathan B.P."/>
            <person name="Zapotocny R."/>
            <person name="Govind R."/>
        </authorList>
    </citation>
    <scope>NUCLEOTIDE SEQUENCE [LARGE SCALE GENOMIC DNA]</scope>
    <scope>FUNCTION</scope>
    <scope>DISRUPTION PHENOTYPE</scope>
    <source>
        <strain>ATCC 9714 / DSM 2141 / JCM 3814 / LMG 15708 / NCIMB 10717 / 211</strain>
    </source>
</reference>
<organism>
    <name type="scientific">Paraclostridium sordellii (strain ATCC 9714 / DSM 2141 / JCM 3814 / LMG 15708 / NCIMB 10717 / 211)</name>
    <name type="common">Clostridium sordellii</name>
    <dbReference type="NCBI Taxonomy" id="1292036"/>
    <lineage>
        <taxon>Bacteria</taxon>
        <taxon>Bacillati</taxon>
        <taxon>Bacillota</taxon>
        <taxon>Clostridia</taxon>
        <taxon>Peptostreptococcales</taxon>
        <taxon>Peptostreptococcaceae</taxon>
        <taxon>Paraclostridium</taxon>
    </lineage>
</organism>
<comment type="function">
    <text evidence="2 4">Sigma factors are initiation factors that promote the attachment of RNA polymerase to specific initiation sites and are then released (Probable). Transcriptional regulator specifically required to activate expression of the toxin gene locus, composed of tcsL and tcdE/utxA (PubMed:23873908).</text>
</comment>
<comment type="disruption phenotype">
    <text evidence="2">Cells lacking tcsR grow normally but display reduced toxin production.</text>
</comment>
<comment type="similarity">
    <text evidence="4">Belongs to the sigma-70 factor family.</text>
</comment>
<evidence type="ECO:0000255" key="1"/>
<evidence type="ECO:0000269" key="2">
    <source>
    </source>
</evidence>
<evidence type="ECO:0000303" key="3">
    <source>
    </source>
</evidence>
<evidence type="ECO:0000305" key="4"/>
<evidence type="ECO:0000312" key="5">
    <source>
        <dbReference type="EMBL" id="EPZ61155.1"/>
    </source>
</evidence>